<dbReference type="EMBL" id="AF107021">
    <property type="protein sequence ID" value="AAD40225.1"/>
    <property type="molecule type" value="Genomic_DNA"/>
</dbReference>
<dbReference type="RefSeq" id="XP_038307340.1">
    <property type="nucleotide sequence ID" value="XM_038451412.1"/>
</dbReference>
<dbReference type="SMR" id="Q9XT60"/>
<dbReference type="Ensembl" id="ENSCAFT00030015158.1">
    <property type="protein sequence ID" value="ENSCAFP00030013218.1"/>
    <property type="gene ID" value="ENSCAFG00030008259.1"/>
</dbReference>
<dbReference type="Ensembl" id="ENSCAFT00845040434.1">
    <property type="protein sequence ID" value="ENSCAFP00845031662.1"/>
    <property type="gene ID" value="ENSCAFG00845022918.1"/>
</dbReference>
<dbReference type="GeneID" id="119868773"/>
<dbReference type="VEuPathDB" id="HostDB:ENSCAFG00845022918"/>
<dbReference type="GeneTree" id="ENSGT00940000165583"/>
<dbReference type="InParanoid" id="Q9XT60"/>
<dbReference type="OrthoDB" id="6247875at2759"/>
<dbReference type="Reactome" id="R-CFA-3769402">
    <property type="pathway name" value="Deactivation of the beta-catenin transactivating complex"/>
</dbReference>
<dbReference type="Proteomes" id="UP000002254">
    <property type="component" value="Unplaced"/>
</dbReference>
<dbReference type="Proteomes" id="UP000694429">
    <property type="component" value="Unassembled WGS sequence"/>
</dbReference>
<dbReference type="Proteomes" id="UP000694542">
    <property type="component" value="Unplaced"/>
</dbReference>
<dbReference type="Proteomes" id="UP000805418">
    <property type="component" value="Unassembled WGS sequence"/>
</dbReference>
<dbReference type="GO" id="GO:0005737">
    <property type="term" value="C:cytoplasm"/>
    <property type="evidence" value="ECO:0007669"/>
    <property type="project" value="UniProtKB-SubCell"/>
</dbReference>
<dbReference type="GO" id="GO:0016607">
    <property type="term" value="C:nuclear speck"/>
    <property type="evidence" value="ECO:0007669"/>
    <property type="project" value="UniProtKB-SubCell"/>
</dbReference>
<dbReference type="GO" id="GO:0005634">
    <property type="term" value="C:nucleus"/>
    <property type="evidence" value="ECO:0000250"/>
    <property type="project" value="UniProtKB"/>
</dbReference>
<dbReference type="GO" id="GO:0005516">
    <property type="term" value="F:calmodulin binding"/>
    <property type="evidence" value="ECO:0007669"/>
    <property type="project" value="UniProtKB-KW"/>
</dbReference>
<dbReference type="GO" id="GO:0001228">
    <property type="term" value="F:DNA-binding transcription activator activity, RNA polymerase II-specific"/>
    <property type="evidence" value="ECO:0000318"/>
    <property type="project" value="GO_Central"/>
</dbReference>
<dbReference type="GO" id="GO:0000978">
    <property type="term" value="F:RNA polymerase II cis-regulatory region sequence-specific DNA binding"/>
    <property type="evidence" value="ECO:0000318"/>
    <property type="project" value="GO_Central"/>
</dbReference>
<dbReference type="GO" id="GO:0030154">
    <property type="term" value="P:cell differentiation"/>
    <property type="evidence" value="ECO:0000318"/>
    <property type="project" value="GO_Central"/>
</dbReference>
<dbReference type="GO" id="GO:0030238">
    <property type="term" value="P:male sex determination"/>
    <property type="evidence" value="ECO:0000318"/>
    <property type="project" value="GO_Central"/>
</dbReference>
<dbReference type="GO" id="GO:0010628">
    <property type="term" value="P:positive regulation of gene expression"/>
    <property type="evidence" value="ECO:0000250"/>
    <property type="project" value="UniProtKB"/>
</dbReference>
<dbReference type="GO" id="GO:0045944">
    <property type="term" value="P:positive regulation of transcription by RNA polymerase II"/>
    <property type="evidence" value="ECO:0000318"/>
    <property type="project" value="GO_Central"/>
</dbReference>
<dbReference type="GO" id="GO:0007548">
    <property type="term" value="P:sex differentiation"/>
    <property type="evidence" value="ECO:0007669"/>
    <property type="project" value="UniProtKB-KW"/>
</dbReference>
<dbReference type="CDD" id="cd22034">
    <property type="entry name" value="HMG-box_SoxA_SRY"/>
    <property type="match status" value="1"/>
</dbReference>
<dbReference type="FunFam" id="1.10.30.10:FF:000002">
    <property type="entry name" value="transcription factor Sox-2"/>
    <property type="match status" value="1"/>
</dbReference>
<dbReference type="Gene3D" id="1.10.30.10">
    <property type="entry name" value="High mobility group box domain"/>
    <property type="match status" value="1"/>
</dbReference>
<dbReference type="InterPro" id="IPR009071">
    <property type="entry name" value="HMG_box_dom"/>
</dbReference>
<dbReference type="InterPro" id="IPR036910">
    <property type="entry name" value="HMG_box_dom_sf"/>
</dbReference>
<dbReference type="InterPro" id="IPR017253">
    <property type="entry name" value="SRY"/>
</dbReference>
<dbReference type="InterPro" id="IPR050140">
    <property type="entry name" value="SRY-related_HMG-box_TF-like"/>
</dbReference>
<dbReference type="PANTHER" id="PTHR10270:SF161">
    <property type="entry name" value="SEX-DETERMINING REGION Y PROTEIN"/>
    <property type="match status" value="1"/>
</dbReference>
<dbReference type="PANTHER" id="PTHR10270">
    <property type="entry name" value="SOX TRANSCRIPTION FACTOR"/>
    <property type="match status" value="1"/>
</dbReference>
<dbReference type="Pfam" id="PF00505">
    <property type="entry name" value="HMG_box"/>
    <property type="match status" value="1"/>
</dbReference>
<dbReference type="PIRSF" id="PIRSF037653">
    <property type="entry name" value="SRY"/>
    <property type="match status" value="1"/>
</dbReference>
<dbReference type="SMART" id="SM00398">
    <property type="entry name" value="HMG"/>
    <property type="match status" value="1"/>
</dbReference>
<dbReference type="SUPFAM" id="SSF47095">
    <property type="entry name" value="HMG-box"/>
    <property type="match status" value="1"/>
</dbReference>
<dbReference type="PROSITE" id="PS50118">
    <property type="entry name" value="HMG_BOX_2"/>
    <property type="match status" value="1"/>
</dbReference>
<protein>
    <recommendedName>
        <fullName>Sex-determining region Y protein</fullName>
    </recommendedName>
    <alternativeName>
        <fullName>Testis-determining factor</fullName>
    </alternativeName>
</protein>
<keyword id="KW-0010">Activator</keyword>
<keyword id="KW-0112">Calmodulin-binding</keyword>
<keyword id="KW-0963">Cytoplasm</keyword>
<keyword id="KW-0221">Differentiation</keyword>
<keyword id="KW-0238">DNA-binding</keyword>
<keyword id="KW-0539">Nucleus</keyword>
<keyword id="KW-1185">Reference proteome</keyword>
<keyword id="KW-0726">Sexual differentiation</keyword>
<keyword id="KW-0804">Transcription</keyword>
<keyword id="KW-0805">Transcription regulation</keyword>
<gene>
    <name type="primary">SRY</name>
    <name type="synonym">TDF</name>
</gene>
<comment type="function">
    <text evidence="1 2">Transcriptional regulator that controls a genetic switch in male development. It is necessary and sufficient for initiating male sex determination by directing the development of supporting cell precursors (pre-Sertoli cells) as Sertoli rather than granulosa cells. Involved in different aspects of gene regulation including promoter activation or repression. Binds to the DNA consensus sequence 5'-[AT]AACAA[AT]-3'. SRY HMG box recognizes DNA by partial intercalation in the minor groove and promotes DNA bending. Also involved in pre-mRNA splicing (By similarity). In male adult brain involved in the maintenance of motor functions of dopaminergic neurons (By similarity).</text>
</comment>
<comment type="subunit">
    <text evidence="2">Interacts with CALM, EP300, HDAC3, KPNB1, ZNF208 isoform KRAB-O, PARP1, SLC9A3R2 and WT1. The interaction with EP300 modulates its DNA-binding activity. The interaction with KPNB1 is sensitive to dissociation by Ran in the GTP-bound form. Interaction with PARP1 impaired its DNA-binding activity.</text>
</comment>
<comment type="subcellular location">
    <subcellularLocation>
        <location evidence="2">Nucleus speckle</location>
    </subcellularLocation>
    <subcellularLocation>
        <location evidence="2">Cytoplasm</location>
    </subcellularLocation>
    <subcellularLocation>
        <location evidence="2">Nucleus</location>
    </subcellularLocation>
</comment>
<comment type="similarity">
    <text evidence="5">Belongs to the SRY family.</text>
</comment>
<comment type="online information" name="Protein Spotlight">
    <link uri="https://www.proteinspotlight.org/back_issues/080"/>
    <text>The tenuous nature of sex - Issue 80 of March 2007</text>
</comment>
<reference key="1">
    <citation type="journal article" date="1999" name="Mol. Reprod. Dev.">
        <title>Sry-negative XX sex reversal in purebred dogs.</title>
        <authorList>
            <person name="Meyers-Wallen V.N."/>
            <person name="Schlafer D."/>
            <person name="Barr I."/>
            <person name="Lovell-Badge R."/>
            <person name="Keyzner A."/>
        </authorList>
    </citation>
    <scope>NUCLEOTIDE SEQUENCE [GENOMIC DNA]</scope>
</reference>
<accession>Q9XT60</accession>
<proteinExistence type="inferred from homology"/>
<feature type="chain" id="PRO_0000048652" description="Sex-determining region Y protein">
    <location>
        <begin position="1"/>
        <end position="220"/>
    </location>
</feature>
<feature type="DNA-binding region" description="HMG box" evidence="3">
    <location>
        <begin position="53"/>
        <end position="121"/>
    </location>
</feature>
<feature type="region of interest" description="Disordered" evidence="4">
    <location>
        <begin position="25"/>
        <end position="52"/>
    </location>
</feature>
<organism>
    <name type="scientific">Canis lupus familiaris</name>
    <name type="common">Dog</name>
    <name type="synonym">Canis familiaris</name>
    <dbReference type="NCBI Taxonomy" id="9615"/>
    <lineage>
        <taxon>Eukaryota</taxon>
        <taxon>Metazoa</taxon>
        <taxon>Chordata</taxon>
        <taxon>Craniata</taxon>
        <taxon>Vertebrata</taxon>
        <taxon>Euteleostomi</taxon>
        <taxon>Mammalia</taxon>
        <taxon>Eutheria</taxon>
        <taxon>Laurasiatheria</taxon>
        <taxon>Carnivora</taxon>
        <taxon>Caniformia</taxon>
        <taxon>Canidae</taxon>
        <taxon>Canis</taxon>
    </lineage>
</organism>
<sequence>MFRALNCDDHGAAVQQNAFGFPRKSSDRWTDNSTSNYRCESGGNGRDSGRNRVRRPMNAFLVWSRDQRRKMALENPQMQNSEISKQLGYQWKMLTEAEKWPFFEEAQRLQAMHREKYPDYKYRPRRKATAQKSHKLLPAASSSMLCKQVHVDERFYPFTYTDSCSRAAHTRMEDQLSCSQPMSTARSLLQQEYHSSSASLRDSPETLAAQMSADASFYSK</sequence>
<evidence type="ECO:0000250" key="1">
    <source>
        <dbReference type="UniProtKB" id="P36394"/>
    </source>
</evidence>
<evidence type="ECO:0000250" key="2">
    <source>
        <dbReference type="UniProtKB" id="Q05066"/>
    </source>
</evidence>
<evidence type="ECO:0000255" key="3">
    <source>
        <dbReference type="PROSITE-ProRule" id="PRU00267"/>
    </source>
</evidence>
<evidence type="ECO:0000256" key="4">
    <source>
        <dbReference type="SAM" id="MobiDB-lite"/>
    </source>
</evidence>
<evidence type="ECO:0000305" key="5"/>
<name>SRY_CANLF</name>